<evidence type="ECO:0000255" key="1">
    <source>
        <dbReference type="HAMAP-Rule" id="MF_00455"/>
    </source>
</evidence>
<name>XYLA_BIFLO</name>
<proteinExistence type="inferred from homology"/>
<sequence>MGLWDVDKIEYVGRAKGPKEDFAFHYYDADKVVAGKKMKDWLRFGVAWWHTFNQELVDPFGTGTAHRPYYKYTDPMDQALAKVDYAFELFQKLGVEYFCFHDRDIAPEGDTLRETNANLDKVVDKIEENMKSTGVKLLWNTSSLFTNPRFVSGAATSPFADIYAYAGGQLKKSLEIGKRLGAENYVFWGGREGYENLWNTEMKRETDHIAKFFHMCADYAKEIGFEAQFLIEPKPKEPTLHQYDFDAATAIEFLRNHDLTDVFKLNLEGNHANLAGHTYQHEIRVARESGFLGSLDANQGDKLIGWDMDEFPTDLYETVAVMWEVLQAGSIGPHGGLNFDAKPRRTSFYEEDLFRSHIAGMDAYAAGLLVADKMNQDGFIQNLQAERYSSYDSGIGKDIDEGNVTLADLEAYSLDKPQSELIAATKSDHLESVKATINNYIIDALAEVE</sequence>
<comment type="catalytic activity">
    <reaction evidence="1">
        <text>alpha-D-xylose = alpha-D-xylulofuranose</text>
        <dbReference type="Rhea" id="RHEA:22816"/>
        <dbReference type="ChEBI" id="CHEBI:28518"/>
        <dbReference type="ChEBI" id="CHEBI:188998"/>
        <dbReference type="EC" id="5.3.1.5"/>
    </reaction>
</comment>
<comment type="cofactor">
    <cofactor evidence="1">
        <name>Mg(2+)</name>
        <dbReference type="ChEBI" id="CHEBI:18420"/>
    </cofactor>
    <text evidence="1">Binds 2 magnesium ions per subunit.</text>
</comment>
<comment type="subunit">
    <text evidence="1">Homotetramer.</text>
</comment>
<comment type="subcellular location">
    <subcellularLocation>
        <location evidence="1">Cytoplasm</location>
    </subcellularLocation>
</comment>
<comment type="similarity">
    <text evidence="1">Belongs to the xylose isomerase family.</text>
</comment>
<feature type="chain" id="PRO_0000195769" description="Xylose isomerase">
    <location>
        <begin position="1"/>
        <end position="449"/>
    </location>
</feature>
<feature type="active site" evidence="1">
    <location>
        <position position="101"/>
    </location>
</feature>
<feature type="active site" evidence="1">
    <location>
        <position position="104"/>
    </location>
</feature>
<feature type="binding site" evidence="1">
    <location>
        <position position="232"/>
    </location>
    <ligand>
        <name>Mg(2+)</name>
        <dbReference type="ChEBI" id="CHEBI:18420"/>
        <label>1</label>
    </ligand>
</feature>
<feature type="binding site" evidence="1">
    <location>
        <position position="268"/>
    </location>
    <ligand>
        <name>Mg(2+)</name>
        <dbReference type="ChEBI" id="CHEBI:18420"/>
        <label>1</label>
    </ligand>
</feature>
<feature type="binding site" evidence="1">
    <location>
        <position position="268"/>
    </location>
    <ligand>
        <name>Mg(2+)</name>
        <dbReference type="ChEBI" id="CHEBI:18420"/>
        <label>2</label>
    </ligand>
</feature>
<feature type="binding site" evidence="1">
    <location>
        <position position="271"/>
    </location>
    <ligand>
        <name>Mg(2+)</name>
        <dbReference type="ChEBI" id="CHEBI:18420"/>
        <label>2</label>
    </ligand>
</feature>
<feature type="binding site" evidence="1">
    <location>
        <position position="296"/>
    </location>
    <ligand>
        <name>Mg(2+)</name>
        <dbReference type="ChEBI" id="CHEBI:18420"/>
        <label>1</label>
    </ligand>
</feature>
<feature type="binding site" evidence="1">
    <location>
        <position position="307"/>
    </location>
    <ligand>
        <name>Mg(2+)</name>
        <dbReference type="ChEBI" id="CHEBI:18420"/>
        <label>2</label>
    </ligand>
</feature>
<feature type="binding site" evidence="1">
    <location>
        <position position="309"/>
    </location>
    <ligand>
        <name>Mg(2+)</name>
        <dbReference type="ChEBI" id="CHEBI:18420"/>
        <label>2</label>
    </ligand>
</feature>
<feature type="binding site" evidence="1">
    <location>
        <position position="340"/>
    </location>
    <ligand>
        <name>Mg(2+)</name>
        <dbReference type="ChEBI" id="CHEBI:18420"/>
        <label>1</label>
    </ligand>
</feature>
<organism>
    <name type="scientific">Bifidobacterium longum (strain NCC 2705)</name>
    <dbReference type="NCBI Taxonomy" id="206672"/>
    <lineage>
        <taxon>Bacteria</taxon>
        <taxon>Bacillati</taxon>
        <taxon>Actinomycetota</taxon>
        <taxon>Actinomycetes</taxon>
        <taxon>Bifidobacteriales</taxon>
        <taxon>Bifidobacteriaceae</taxon>
        <taxon>Bifidobacterium</taxon>
    </lineage>
</organism>
<gene>
    <name evidence="1" type="primary">xylA</name>
    <name type="ordered locus">BL1704</name>
</gene>
<keyword id="KW-0119">Carbohydrate metabolism</keyword>
<keyword id="KW-0963">Cytoplasm</keyword>
<keyword id="KW-0413">Isomerase</keyword>
<keyword id="KW-0460">Magnesium</keyword>
<keyword id="KW-0479">Metal-binding</keyword>
<keyword id="KW-1185">Reference proteome</keyword>
<keyword id="KW-0859">Xylose metabolism</keyword>
<protein>
    <recommendedName>
        <fullName evidence="1">Xylose isomerase</fullName>
        <ecNumber evidence="1">5.3.1.5</ecNumber>
    </recommendedName>
</protein>
<dbReference type="EC" id="5.3.1.5" evidence="1"/>
<dbReference type="EMBL" id="AE014295">
    <property type="protein sequence ID" value="AAN25490.1"/>
    <property type="molecule type" value="Genomic_DNA"/>
</dbReference>
<dbReference type="RefSeq" id="NP_696854.1">
    <property type="nucleotide sequence ID" value="NC_004307.2"/>
</dbReference>
<dbReference type="RefSeq" id="WP_007053874.1">
    <property type="nucleotide sequence ID" value="NC_004307.2"/>
</dbReference>
<dbReference type="SMR" id="Q8G3Q1"/>
<dbReference type="STRING" id="206672.BL1704"/>
<dbReference type="EnsemblBacteria" id="AAN25490">
    <property type="protein sequence ID" value="AAN25490"/>
    <property type="gene ID" value="BL1704"/>
</dbReference>
<dbReference type="KEGG" id="blo:BL1704"/>
<dbReference type="PATRIC" id="fig|206672.9.peg.1757"/>
<dbReference type="HOGENOM" id="CLU_037261_1_0_11"/>
<dbReference type="OrthoDB" id="9763981at2"/>
<dbReference type="PhylomeDB" id="Q8G3Q1"/>
<dbReference type="Proteomes" id="UP000000439">
    <property type="component" value="Chromosome"/>
</dbReference>
<dbReference type="GO" id="GO:0005737">
    <property type="term" value="C:cytoplasm"/>
    <property type="evidence" value="ECO:0007669"/>
    <property type="project" value="UniProtKB-SubCell"/>
</dbReference>
<dbReference type="GO" id="GO:0000287">
    <property type="term" value="F:magnesium ion binding"/>
    <property type="evidence" value="ECO:0007669"/>
    <property type="project" value="UniProtKB-UniRule"/>
</dbReference>
<dbReference type="GO" id="GO:0009045">
    <property type="term" value="F:xylose isomerase activity"/>
    <property type="evidence" value="ECO:0007669"/>
    <property type="project" value="UniProtKB-UniRule"/>
</dbReference>
<dbReference type="GO" id="GO:0042732">
    <property type="term" value="P:D-xylose metabolic process"/>
    <property type="evidence" value="ECO:0007669"/>
    <property type="project" value="UniProtKB-UniRule"/>
</dbReference>
<dbReference type="Gene3D" id="3.20.20.150">
    <property type="entry name" value="Divalent-metal-dependent TIM barrel enzymes"/>
    <property type="match status" value="1"/>
</dbReference>
<dbReference type="HAMAP" id="MF_00455">
    <property type="entry name" value="Xylose_isom_A"/>
    <property type="match status" value="1"/>
</dbReference>
<dbReference type="InterPro" id="IPR036237">
    <property type="entry name" value="Xyl_isomerase-like_sf"/>
</dbReference>
<dbReference type="InterPro" id="IPR013022">
    <property type="entry name" value="Xyl_isomerase-like_TIM-brl"/>
</dbReference>
<dbReference type="InterPro" id="IPR013452">
    <property type="entry name" value="Xylose_isom_bac"/>
</dbReference>
<dbReference type="InterPro" id="IPR001998">
    <property type="entry name" value="Xylose_isomerase"/>
</dbReference>
<dbReference type="NCBIfam" id="NF003998">
    <property type="entry name" value="PRK05474.1"/>
    <property type="match status" value="1"/>
</dbReference>
<dbReference type="NCBIfam" id="TIGR02630">
    <property type="entry name" value="xylose_isom_A"/>
    <property type="match status" value="1"/>
</dbReference>
<dbReference type="PANTHER" id="PTHR48408">
    <property type="match status" value="1"/>
</dbReference>
<dbReference type="PANTHER" id="PTHR48408:SF1">
    <property type="entry name" value="XYLOSE ISOMERASE"/>
    <property type="match status" value="1"/>
</dbReference>
<dbReference type="Pfam" id="PF01261">
    <property type="entry name" value="AP_endonuc_2"/>
    <property type="match status" value="1"/>
</dbReference>
<dbReference type="PRINTS" id="PR00688">
    <property type="entry name" value="XYLOSISMRASE"/>
</dbReference>
<dbReference type="SUPFAM" id="SSF51658">
    <property type="entry name" value="Xylose isomerase-like"/>
    <property type="match status" value="1"/>
</dbReference>
<dbReference type="PROSITE" id="PS51415">
    <property type="entry name" value="XYLOSE_ISOMERASE"/>
    <property type="match status" value="1"/>
</dbReference>
<accession>Q8G3Q1</accession>
<reference key="1">
    <citation type="journal article" date="2002" name="Proc. Natl. Acad. Sci. U.S.A.">
        <title>The genome sequence of Bifidobacterium longum reflects its adaptation to the human gastrointestinal tract.</title>
        <authorList>
            <person name="Schell M.A."/>
            <person name="Karmirantzou M."/>
            <person name="Snel B."/>
            <person name="Vilanova D."/>
            <person name="Berger B."/>
            <person name="Pessi G."/>
            <person name="Zwahlen M.-C."/>
            <person name="Desiere F."/>
            <person name="Bork P."/>
            <person name="Delley M."/>
            <person name="Pridmore R.D."/>
            <person name="Arigoni F."/>
        </authorList>
    </citation>
    <scope>NUCLEOTIDE SEQUENCE [LARGE SCALE GENOMIC DNA]</scope>
    <source>
        <strain>NCC 2705</strain>
    </source>
</reference>